<evidence type="ECO:0000255" key="1">
    <source>
        <dbReference type="PROSITE-ProRule" id="PRU00978"/>
    </source>
</evidence>
<evidence type="ECO:0000256" key="2">
    <source>
        <dbReference type="SAM" id="MobiDB-lite"/>
    </source>
</evidence>
<evidence type="ECO:0000269" key="3">
    <source>
    </source>
</evidence>
<evidence type="ECO:0000305" key="4"/>
<comment type="function">
    <text evidence="3">Since they lack a putative transactivation domain, the small Mafs behave as transcriptional repressors when they dimerize among themselves. However, they act as transcriptional activators by dimerizing with other (usually larger) basic-zipper proteins and recruiting them to specific DNA-binding sites. Small Maf proteins heterodimerize with Fos and may act as competitive repressors of the NF-E2 transcription factor.</text>
</comment>
<comment type="subunit">
    <text evidence="3">Homodimer or heterodimer.</text>
</comment>
<comment type="subcellular location">
    <subcellularLocation>
        <location evidence="3">Nucleus</location>
    </subcellularLocation>
</comment>
<comment type="similarity">
    <text evidence="4">Belongs to the bZIP family. Maf subfamily.</text>
</comment>
<protein>
    <recommendedName>
        <fullName>Transcription factor MafK</fullName>
    </recommendedName>
</protein>
<proteinExistence type="evidence at transcript level"/>
<name>MAFK_CHICK</name>
<dbReference type="EMBL" id="D16187">
    <property type="protein sequence ID" value="BAA03728.1"/>
    <property type="molecule type" value="mRNA"/>
</dbReference>
<dbReference type="PIR" id="A56253">
    <property type="entry name" value="A56253"/>
</dbReference>
<dbReference type="RefSeq" id="NP_990087.1">
    <property type="nucleotide sequence ID" value="NM_204756.2"/>
</dbReference>
<dbReference type="RefSeq" id="XP_015149619.1">
    <property type="nucleotide sequence ID" value="XM_015294133.3"/>
</dbReference>
<dbReference type="RefSeq" id="XP_015149620.1">
    <property type="nucleotide sequence ID" value="XM_015294134.4"/>
</dbReference>
<dbReference type="RefSeq" id="XP_046756513.1">
    <property type="nucleotide sequence ID" value="XM_046900557.1"/>
</dbReference>
<dbReference type="RefSeq" id="XP_046783236.1">
    <property type="nucleotide sequence ID" value="XM_046927280.1"/>
</dbReference>
<dbReference type="RefSeq" id="XP_046783239.1">
    <property type="nucleotide sequence ID" value="XM_046927283.1"/>
</dbReference>
<dbReference type="RefSeq" id="XP_046783240.1">
    <property type="nucleotide sequence ID" value="XM_046927284.1"/>
</dbReference>
<dbReference type="SMR" id="Q90596"/>
<dbReference type="FunCoup" id="Q90596">
    <property type="interactions" value="855"/>
</dbReference>
<dbReference type="MINT" id="Q90596"/>
<dbReference type="STRING" id="9031.ENSGALP00000046925"/>
<dbReference type="GlyGen" id="Q90596">
    <property type="glycosylation" value="1 site"/>
</dbReference>
<dbReference type="PaxDb" id="9031-ENSGALP00000006645"/>
<dbReference type="Ensembl" id="ENSGALT00010047494.1">
    <property type="protein sequence ID" value="ENSGALP00010028124.1"/>
    <property type="gene ID" value="ENSGALG00010019675.1"/>
</dbReference>
<dbReference type="GeneID" id="395518"/>
<dbReference type="KEGG" id="gga:395518"/>
<dbReference type="CTD" id="7975"/>
<dbReference type="VEuPathDB" id="HostDB:geneid_395518"/>
<dbReference type="eggNOG" id="KOG4196">
    <property type="taxonomic scope" value="Eukaryota"/>
</dbReference>
<dbReference type="GeneTree" id="ENSGT00940000160044"/>
<dbReference type="HOGENOM" id="CLU_112948_0_0_1"/>
<dbReference type="InParanoid" id="Q90596"/>
<dbReference type="OrthoDB" id="5974330at2759"/>
<dbReference type="PhylomeDB" id="Q90596"/>
<dbReference type="TreeFam" id="TF325689"/>
<dbReference type="Reactome" id="R-GGA-9707616">
    <property type="pathway name" value="Heme signaling"/>
</dbReference>
<dbReference type="Reactome" id="R-GGA-9708530">
    <property type="pathway name" value="Regulation of BACH1 activity"/>
</dbReference>
<dbReference type="PRO" id="PR:Q90596"/>
<dbReference type="Proteomes" id="UP000000539">
    <property type="component" value="Chromosome 14"/>
</dbReference>
<dbReference type="Bgee" id="ENSGALG00000004189">
    <property type="expression patterns" value="Expressed in lung and 12 other cell types or tissues"/>
</dbReference>
<dbReference type="GO" id="GO:0005634">
    <property type="term" value="C:nucleus"/>
    <property type="evidence" value="ECO:0000318"/>
    <property type="project" value="GO_Central"/>
</dbReference>
<dbReference type="GO" id="GO:0003700">
    <property type="term" value="F:DNA-binding transcription factor activity"/>
    <property type="evidence" value="ECO:0000250"/>
    <property type="project" value="UniProtKB"/>
</dbReference>
<dbReference type="GO" id="GO:0000981">
    <property type="term" value="F:DNA-binding transcription factor activity, RNA polymerase II-specific"/>
    <property type="evidence" value="ECO:0000318"/>
    <property type="project" value="GO_Central"/>
</dbReference>
<dbReference type="GO" id="GO:0000978">
    <property type="term" value="F:RNA polymerase II cis-regulatory region sequence-specific DNA binding"/>
    <property type="evidence" value="ECO:0000318"/>
    <property type="project" value="GO_Central"/>
</dbReference>
<dbReference type="GO" id="GO:0043565">
    <property type="term" value="F:sequence-specific DNA binding"/>
    <property type="evidence" value="ECO:0000250"/>
    <property type="project" value="UniProtKB"/>
</dbReference>
<dbReference type="GO" id="GO:0000976">
    <property type="term" value="F:transcription cis-regulatory region binding"/>
    <property type="evidence" value="ECO:0000250"/>
    <property type="project" value="UniProtKB"/>
</dbReference>
<dbReference type="GO" id="GO:0006357">
    <property type="term" value="P:regulation of transcription by RNA polymerase II"/>
    <property type="evidence" value="ECO:0000318"/>
    <property type="project" value="GO_Central"/>
</dbReference>
<dbReference type="CDD" id="cd14717">
    <property type="entry name" value="bZIP_Maf_small"/>
    <property type="match status" value="1"/>
</dbReference>
<dbReference type="FunFam" id="1.20.5.170:FF:000011">
    <property type="entry name" value="Transcription factor MafG, putative"/>
    <property type="match status" value="1"/>
</dbReference>
<dbReference type="Gene3D" id="1.20.5.170">
    <property type="match status" value="1"/>
</dbReference>
<dbReference type="InterPro" id="IPR004827">
    <property type="entry name" value="bZIP"/>
</dbReference>
<dbReference type="InterPro" id="IPR004826">
    <property type="entry name" value="bZIP_Maf"/>
</dbReference>
<dbReference type="InterPro" id="IPR046347">
    <property type="entry name" value="bZIP_sf"/>
</dbReference>
<dbReference type="InterPro" id="IPR008917">
    <property type="entry name" value="TF_DNA-bd_sf"/>
</dbReference>
<dbReference type="InterPro" id="IPR024874">
    <property type="entry name" value="Transcription_factor_Maf_fam"/>
</dbReference>
<dbReference type="PANTHER" id="PTHR10129">
    <property type="entry name" value="TRANSCRIPTION FACTOR MAF"/>
    <property type="match status" value="1"/>
</dbReference>
<dbReference type="PANTHER" id="PTHR10129:SF26">
    <property type="entry name" value="TRANSCRIPTION FACTOR MAFK"/>
    <property type="match status" value="1"/>
</dbReference>
<dbReference type="Pfam" id="PF03131">
    <property type="entry name" value="bZIP_Maf"/>
    <property type="match status" value="1"/>
</dbReference>
<dbReference type="SMART" id="SM00338">
    <property type="entry name" value="BRLZ"/>
    <property type="match status" value="1"/>
</dbReference>
<dbReference type="SUPFAM" id="SSF47454">
    <property type="entry name" value="A DNA-binding domain in eukaryotic transcription factors"/>
    <property type="match status" value="1"/>
</dbReference>
<dbReference type="SUPFAM" id="SSF57959">
    <property type="entry name" value="Leucine zipper domain"/>
    <property type="match status" value="1"/>
</dbReference>
<dbReference type="PROSITE" id="PS50217">
    <property type="entry name" value="BZIP"/>
    <property type="match status" value="1"/>
</dbReference>
<feature type="chain" id="PRO_0000076505" description="Transcription factor MafK">
    <location>
        <begin position="1"/>
        <end position="156"/>
    </location>
</feature>
<feature type="domain" description="bZIP" evidence="1">
    <location>
        <begin position="51"/>
        <end position="114"/>
    </location>
</feature>
<feature type="region of interest" description="Disordered" evidence="2">
    <location>
        <begin position="1"/>
        <end position="21"/>
    </location>
</feature>
<feature type="region of interest" description="Basic motif" evidence="1">
    <location>
        <begin position="51"/>
        <end position="76"/>
    </location>
</feature>
<feature type="region of interest" description="Leucine-zipper" evidence="1">
    <location>
        <begin position="79"/>
        <end position="93"/>
    </location>
</feature>
<keyword id="KW-0238">DNA-binding</keyword>
<keyword id="KW-0539">Nucleus</keyword>
<keyword id="KW-1185">Reference proteome</keyword>
<keyword id="KW-0678">Repressor</keyword>
<keyword id="KW-0804">Transcription</keyword>
<keyword id="KW-0805">Transcription regulation</keyword>
<gene>
    <name type="primary">MAFK</name>
</gene>
<organism>
    <name type="scientific">Gallus gallus</name>
    <name type="common">Chicken</name>
    <dbReference type="NCBI Taxonomy" id="9031"/>
    <lineage>
        <taxon>Eukaryota</taxon>
        <taxon>Metazoa</taxon>
        <taxon>Chordata</taxon>
        <taxon>Craniata</taxon>
        <taxon>Vertebrata</taxon>
        <taxon>Euteleostomi</taxon>
        <taxon>Archelosauria</taxon>
        <taxon>Archosauria</taxon>
        <taxon>Dinosauria</taxon>
        <taxon>Saurischia</taxon>
        <taxon>Theropoda</taxon>
        <taxon>Coelurosauria</taxon>
        <taxon>Aves</taxon>
        <taxon>Neognathae</taxon>
        <taxon>Galloanserae</taxon>
        <taxon>Galliformes</taxon>
        <taxon>Phasianidae</taxon>
        <taxon>Phasianinae</taxon>
        <taxon>Gallus</taxon>
    </lineage>
</organism>
<reference key="1">
    <citation type="journal article" date="1993" name="Oncogene">
        <title>Two new members of the maf oncogene family, mafK and mafF, encode nuclear b-Zip proteins lacking putative trans-activator domain.</title>
        <authorList>
            <person name="Fujiwara K.T."/>
            <person name="Kataoka K."/>
            <person name="Nishizawa M."/>
        </authorList>
    </citation>
    <scope>NUCLEOTIDE SEQUENCE [MRNA]</scope>
    <source>
        <tissue>Fibroblast</tissue>
    </source>
</reference>
<accession>Q90596</accession>
<sequence>MTTNPKPNKALKVKEESGENAPVLSDDELVSMSVRELNQHLRGLTKEEVIRLKQRRRTLKNRGYAASCRIKRVTQKEELERQRVELQQEVEKLARENSSMKLELDALRSKYEALQTFARTVARGPITPTKVATTSVITIVKSAEISSSSVPFSAAS</sequence>